<accession>B8GLM2</accession>
<comment type="subcellular location">
    <subcellularLocation>
        <location evidence="1">Cell membrane</location>
        <topology evidence="1">Multi-pass membrane protein</topology>
    </subcellularLocation>
</comment>
<comment type="similarity">
    <text evidence="1">Belongs to the UPF0391 family.</text>
</comment>
<sequence>MLGWALIFLIVAIIAGTLGFSGVAGAASWIAQVLFLVFLALLVISLLGGRRV</sequence>
<keyword id="KW-1003">Cell membrane</keyword>
<keyword id="KW-0472">Membrane</keyword>
<keyword id="KW-1185">Reference proteome</keyword>
<keyword id="KW-0812">Transmembrane</keyword>
<keyword id="KW-1133">Transmembrane helix</keyword>
<proteinExistence type="inferred from homology"/>
<protein>
    <recommendedName>
        <fullName evidence="1">UPF0391 membrane protein Tgr7_2500</fullName>
    </recommendedName>
</protein>
<dbReference type="EMBL" id="CP001339">
    <property type="protein sequence ID" value="ACL73577.1"/>
    <property type="molecule type" value="Genomic_DNA"/>
</dbReference>
<dbReference type="RefSeq" id="WP_012639052.1">
    <property type="nucleotide sequence ID" value="NC_011901.1"/>
</dbReference>
<dbReference type="STRING" id="396588.Tgr7_2500"/>
<dbReference type="KEGG" id="tgr:Tgr7_2500"/>
<dbReference type="eggNOG" id="COG5487">
    <property type="taxonomic scope" value="Bacteria"/>
</dbReference>
<dbReference type="HOGENOM" id="CLU_187346_2_1_6"/>
<dbReference type="OrthoDB" id="5461362at2"/>
<dbReference type="Proteomes" id="UP000002383">
    <property type="component" value="Chromosome"/>
</dbReference>
<dbReference type="GO" id="GO:0005886">
    <property type="term" value="C:plasma membrane"/>
    <property type="evidence" value="ECO:0007669"/>
    <property type="project" value="UniProtKB-SubCell"/>
</dbReference>
<dbReference type="HAMAP" id="MF_01361">
    <property type="entry name" value="UPF0391"/>
    <property type="match status" value="1"/>
</dbReference>
<dbReference type="InterPro" id="IPR009760">
    <property type="entry name" value="DUF1328"/>
</dbReference>
<dbReference type="NCBIfam" id="NF010229">
    <property type="entry name" value="PRK13682.1-4"/>
    <property type="match status" value="1"/>
</dbReference>
<dbReference type="Pfam" id="PF07043">
    <property type="entry name" value="DUF1328"/>
    <property type="match status" value="1"/>
</dbReference>
<dbReference type="PIRSF" id="PIRSF036466">
    <property type="entry name" value="UCP036466"/>
    <property type="match status" value="1"/>
</dbReference>
<name>Y2500_THISH</name>
<gene>
    <name type="ordered locus">Tgr7_2500</name>
</gene>
<organism>
    <name type="scientific">Thioalkalivibrio sulfidiphilus (strain HL-EbGR7)</name>
    <dbReference type="NCBI Taxonomy" id="396588"/>
    <lineage>
        <taxon>Bacteria</taxon>
        <taxon>Pseudomonadati</taxon>
        <taxon>Pseudomonadota</taxon>
        <taxon>Gammaproteobacteria</taxon>
        <taxon>Chromatiales</taxon>
        <taxon>Ectothiorhodospiraceae</taxon>
        <taxon>Thioalkalivibrio</taxon>
    </lineage>
</organism>
<reference key="1">
    <citation type="journal article" date="2011" name="Stand. Genomic Sci.">
        <title>Complete genome sequence of 'Thioalkalivibrio sulfidophilus' HL-EbGr7.</title>
        <authorList>
            <person name="Muyzer G."/>
            <person name="Sorokin D.Y."/>
            <person name="Mavromatis K."/>
            <person name="Lapidus A."/>
            <person name="Clum A."/>
            <person name="Ivanova N."/>
            <person name="Pati A."/>
            <person name="d'Haeseleer P."/>
            <person name="Woyke T."/>
            <person name="Kyrpides N.C."/>
        </authorList>
    </citation>
    <scope>NUCLEOTIDE SEQUENCE [LARGE SCALE GENOMIC DNA]</scope>
    <source>
        <strain>HL-EbGR7</strain>
    </source>
</reference>
<feature type="chain" id="PRO_1000166691" description="UPF0391 membrane protein Tgr7_2500">
    <location>
        <begin position="1"/>
        <end position="52"/>
    </location>
</feature>
<feature type="transmembrane region" description="Helical" evidence="1">
    <location>
        <begin position="4"/>
        <end position="24"/>
    </location>
</feature>
<feature type="transmembrane region" description="Helical" evidence="1">
    <location>
        <begin position="29"/>
        <end position="49"/>
    </location>
</feature>
<evidence type="ECO:0000255" key="1">
    <source>
        <dbReference type="HAMAP-Rule" id="MF_01361"/>
    </source>
</evidence>